<dbReference type="EMBL" id="AY653733">
    <property type="protein sequence ID" value="AAV51002.1"/>
    <property type="molecule type" value="Genomic_DNA"/>
</dbReference>
<dbReference type="SMR" id="Q5UNZ6"/>
<dbReference type="KEGG" id="vg:9925399"/>
<dbReference type="OrthoDB" id="35171at10239"/>
<dbReference type="Proteomes" id="UP000001134">
    <property type="component" value="Genome"/>
</dbReference>
<dbReference type="GO" id="GO:0051260">
    <property type="term" value="P:protein homooligomerization"/>
    <property type="evidence" value="ECO:0007669"/>
    <property type="project" value="InterPro"/>
</dbReference>
<dbReference type="Gene3D" id="3.30.710.10">
    <property type="entry name" value="Potassium Channel Kv1.1, Chain A"/>
    <property type="match status" value="1"/>
</dbReference>
<dbReference type="InterPro" id="IPR045068">
    <property type="entry name" value="BACURD1-3"/>
</dbReference>
<dbReference type="InterPro" id="IPR000210">
    <property type="entry name" value="BTB/POZ_dom"/>
</dbReference>
<dbReference type="InterPro" id="IPR011333">
    <property type="entry name" value="SKP1/BTB/POZ_sf"/>
</dbReference>
<dbReference type="InterPro" id="IPR003131">
    <property type="entry name" value="T1-type_BTB"/>
</dbReference>
<dbReference type="PANTHER" id="PTHR11145">
    <property type="entry name" value="BTB/POZ DOMAIN-CONTAINING ADAPTER FOR CUL3-MEDIATED RHOA DEGRADATION PROTEIN FAMILY MEMBER"/>
    <property type="match status" value="1"/>
</dbReference>
<dbReference type="PANTHER" id="PTHR11145:SF8">
    <property type="entry name" value="RE57120P"/>
    <property type="match status" value="1"/>
</dbReference>
<dbReference type="Pfam" id="PF02214">
    <property type="entry name" value="BTB_2"/>
    <property type="match status" value="1"/>
</dbReference>
<dbReference type="SUPFAM" id="SSF52954">
    <property type="entry name" value="Class II aaRS ABD-related"/>
    <property type="match status" value="1"/>
</dbReference>
<dbReference type="SUPFAM" id="SSF54695">
    <property type="entry name" value="POZ domain"/>
    <property type="match status" value="1"/>
</dbReference>
<dbReference type="PROSITE" id="PS50097">
    <property type="entry name" value="BTB"/>
    <property type="match status" value="1"/>
</dbReference>
<name>YL742_MIMIV</name>
<feature type="chain" id="PRO_0000243995" description="Putative BTB/POZ domain-containing protein L742">
    <location>
        <begin position="1"/>
        <end position="449"/>
    </location>
</feature>
<feature type="domain" description="BTB" evidence="1">
    <location>
        <begin position="79"/>
        <end position="148"/>
    </location>
</feature>
<sequence length="449" mass="52236">MDNNTVITINTSDDTLQTYYSTIAKCPSLTSLINDNTISLNIRTNHMVMILNYFRNINSIQYLYPIANVARKLGIEFNEDGYVYINIGGKIFYVEKKLMSNKLGYFEAFFRNYNQLDPDYSSILIDRCPNLFAKIMSFLTMSNQELSGTTRLELQYYCYNLRNYFIKLEHFKYMDYLLDHYCSHNYRLVTDMNISDNTVKTTLENSQNIYAIFFKNRIDIKTLKDNISIKINNIESNTNLLILSNELVFDDNFIFIKLESDKKLPCDIEITFPDTTIISGDSCFFKTKFRCDKHNGIIRDTSSHNVTSKNGNIYTVDVDIDQNKITIPVKNLITNIFNEQEVDKFSDVLVSDIIFVTDKFSLKGAYVELSCNTINESINCSENSQIIAKCSLKKSFGSKQKYRINFPFTTKYIKNVLPHYSGNYEIVINLENKYEGPLYLKYRTIAIHK</sequence>
<evidence type="ECO:0000255" key="1">
    <source>
        <dbReference type="PROSITE-ProRule" id="PRU00037"/>
    </source>
</evidence>
<evidence type="ECO:0000305" key="2"/>
<keyword id="KW-1185">Reference proteome</keyword>
<proteinExistence type="inferred from homology"/>
<reference key="1">
    <citation type="journal article" date="2004" name="Science">
        <title>The 1.2-megabase genome sequence of Mimivirus.</title>
        <authorList>
            <person name="Raoult D."/>
            <person name="Audic S."/>
            <person name="Robert C."/>
            <person name="Abergel C."/>
            <person name="Renesto P."/>
            <person name="Ogata H."/>
            <person name="La Scola B."/>
            <person name="Susan M."/>
            <person name="Claverie J.-M."/>
        </authorList>
    </citation>
    <scope>NUCLEOTIDE SEQUENCE [LARGE SCALE GENOMIC DNA]</scope>
    <source>
        <strain>Rowbotham-Bradford</strain>
    </source>
</reference>
<organism>
    <name type="scientific">Acanthamoeba polyphaga mimivirus</name>
    <name type="common">APMV</name>
    <dbReference type="NCBI Taxonomy" id="212035"/>
    <lineage>
        <taxon>Viruses</taxon>
        <taxon>Varidnaviria</taxon>
        <taxon>Bamfordvirae</taxon>
        <taxon>Nucleocytoviricota</taxon>
        <taxon>Megaviricetes</taxon>
        <taxon>Imitervirales</taxon>
        <taxon>Mimiviridae</taxon>
        <taxon>Megamimivirinae</taxon>
        <taxon>Mimivirus</taxon>
        <taxon>Mimivirus bradfordmassiliense</taxon>
    </lineage>
</organism>
<comment type="similarity">
    <text evidence="2">Belongs to the mimivirus BTB/WD family.</text>
</comment>
<gene>
    <name type="ordered locus">MIMI_L742</name>
</gene>
<accession>Q5UNZ6</accession>
<protein>
    <recommendedName>
        <fullName>Putative BTB/POZ domain-containing protein L742</fullName>
    </recommendedName>
</protein>
<organismHost>
    <name type="scientific">Acanthamoeba polyphaga</name>
    <name type="common">Amoeba</name>
    <dbReference type="NCBI Taxonomy" id="5757"/>
</organismHost>